<keyword id="KW-0687">Ribonucleoprotein</keyword>
<keyword id="KW-0689">Ribosomal protein</keyword>
<keyword id="KW-0694">RNA-binding</keyword>
<keyword id="KW-0699">rRNA-binding</keyword>
<reference key="1">
    <citation type="journal article" date="2008" name="ISME J.">
        <title>Comparative genomics of two ecotypes of the marine planktonic copiotroph Alteromonas macleodii suggests alternative lifestyles associated with different kinds of particulate organic matter.</title>
        <authorList>
            <person name="Ivars-Martinez E."/>
            <person name="Martin-Cuadrado A.-B."/>
            <person name="D'Auria G."/>
            <person name="Mira A."/>
            <person name="Ferriera S."/>
            <person name="Johnson J."/>
            <person name="Friedman R."/>
            <person name="Rodriguez-Valera F."/>
        </authorList>
    </citation>
    <scope>NUCLEOTIDE SEQUENCE [LARGE SCALE GENOMIC DNA]</scope>
    <source>
        <strain>DSM 17117 / CIP 110805 / LMG 28347 / Deep ecotype</strain>
    </source>
</reference>
<proteinExistence type="inferred from homology"/>
<evidence type="ECO:0000255" key="1">
    <source>
        <dbReference type="HAMAP-Rule" id="MF_01310"/>
    </source>
</evidence>
<evidence type="ECO:0000305" key="2"/>
<organism>
    <name type="scientific">Alteromonas mediterranea (strain DSM 17117 / CIP 110805 / LMG 28347 / Deep ecotype)</name>
    <dbReference type="NCBI Taxonomy" id="1774373"/>
    <lineage>
        <taxon>Bacteria</taxon>
        <taxon>Pseudomonadati</taxon>
        <taxon>Pseudomonadota</taxon>
        <taxon>Gammaproteobacteria</taxon>
        <taxon>Alteromonadales</taxon>
        <taxon>Alteromonadaceae</taxon>
        <taxon>Alteromonas/Salinimonas group</taxon>
        <taxon>Alteromonas</taxon>
    </lineage>
</organism>
<name>RS11_ALTMD</name>
<accession>B4RT51</accession>
<accession>F2GAI9</accession>
<protein>
    <recommendedName>
        <fullName evidence="1">Small ribosomal subunit protein uS11</fullName>
    </recommendedName>
    <alternativeName>
        <fullName evidence="2">30S ribosomal protein S11</fullName>
    </alternativeName>
</protein>
<sequence>MAKAPARSTRKRAKRQVADGMAHIHASFNNTIVTITDRSGNALAWATSGGSGFRGSRKSTPFAAQVAAERAGVAAQEYGLKNLEVFVKGPGPGRESAIRALNATGYKITNITDVTPIPHNGCRPPKKRRV</sequence>
<dbReference type="EMBL" id="CP001103">
    <property type="protein sequence ID" value="AEA98923.1"/>
    <property type="molecule type" value="Genomic_DNA"/>
</dbReference>
<dbReference type="RefSeq" id="WP_012519215.1">
    <property type="nucleotide sequence ID" value="NC_011138.3"/>
</dbReference>
<dbReference type="SMR" id="B4RT51"/>
<dbReference type="GeneID" id="56343823"/>
<dbReference type="KEGG" id="amc:MADE_1013945"/>
<dbReference type="HOGENOM" id="CLU_072439_5_0_6"/>
<dbReference type="Proteomes" id="UP000001870">
    <property type="component" value="Chromosome"/>
</dbReference>
<dbReference type="GO" id="GO:1990904">
    <property type="term" value="C:ribonucleoprotein complex"/>
    <property type="evidence" value="ECO:0007669"/>
    <property type="project" value="UniProtKB-KW"/>
</dbReference>
<dbReference type="GO" id="GO:0005840">
    <property type="term" value="C:ribosome"/>
    <property type="evidence" value="ECO:0007669"/>
    <property type="project" value="UniProtKB-KW"/>
</dbReference>
<dbReference type="GO" id="GO:0019843">
    <property type="term" value="F:rRNA binding"/>
    <property type="evidence" value="ECO:0007669"/>
    <property type="project" value="UniProtKB-UniRule"/>
</dbReference>
<dbReference type="GO" id="GO:0003735">
    <property type="term" value="F:structural constituent of ribosome"/>
    <property type="evidence" value="ECO:0007669"/>
    <property type="project" value="InterPro"/>
</dbReference>
<dbReference type="GO" id="GO:0006412">
    <property type="term" value="P:translation"/>
    <property type="evidence" value="ECO:0007669"/>
    <property type="project" value="UniProtKB-UniRule"/>
</dbReference>
<dbReference type="FunFam" id="3.30.420.80:FF:000001">
    <property type="entry name" value="30S ribosomal protein S11"/>
    <property type="match status" value="1"/>
</dbReference>
<dbReference type="Gene3D" id="3.30.420.80">
    <property type="entry name" value="Ribosomal protein S11"/>
    <property type="match status" value="1"/>
</dbReference>
<dbReference type="HAMAP" id="MF_01310">
    <property type="entry name" value="Ribosomal_uS11"/>
    <property type="match status" value="1"/>
</dbReference>
<dbReference type="InterPro" id="IPR001971">
    <property type="entry name" value="Ribosomal_uS11"/>
</dbReference>
<dbReference type="InterPro" id="IPR019981">
    <property type="entry name" value="Ribosomal_uS11_bac-type"/>
</dbReference>
<dbReference type="InterPro" id="IPR018102">
    <property type="entry name" value="Ribosomal_uS11_CS"/>
</dbReference>
<dbReference type="InterPro" id="IPR036967">
    <property type="entry name" value="Ribosomal_uS11_sf"/>
</dbReference>
<dbReference type="NCBIfam" id="NF003698">
    <property type="entry name" value="PRK05309.1"/>
    <property type="match status" value="1"/>
</dbReference>
<dbReference type="NCBIfam" id="TIGR03632">
    <property type="entry name" value="uS11_bact"/>
    <property type="match status" value="1"/>
</dbReference>
<dbReference type="PANTHER" id="PTHR11759">
    <property type="entry name" value="40S RIBOSOMAL PROTEIN S14/30S RIBOSOMAL PROTEIN S11"/>
    <property type="match status" value="1"/>
</dbReference>
<dbReference type="Pfam" id="PF00411">
    <property type="entry name" value="Ribosomal_S11"/>
    <property type="match status" value="1"/>
</dbReference>
<dbReference type="PIRSF" id="PIRSF002131">
    <property type="entry name" value="Ribosomal_S11"/>
    <property type="match status" value="1"/>
</dbReference>
<dbReference type="SUPFAM" id="SSF53137">
    <property type="entry name" value="Translational machinery components"/>
    <property type="match status" value="1"/>
</dbReference>
<dbReference type="PROSITE" id="PS00054">
    <property type="entry name" value="RIBOSOMAL_S11"/>
    <property type="match status" value="1"/>
</dbReference>
<comment type="function">
    <text evidence="1">Located on the platform of the 30S subunit, it bridges several disparate RNA helices of the 16S rRNA. Forms part of the Shine-Dalgarno cleft in the 70S ribosome.</text>
</comment>
<comment type="subunit">
    <text evidence="1">Part of the 30S ribosomal subunit. Interacts with proteins S7 and S18. Binds to IF-3.</text>
</comment>
<comment type="similarity">
    <text evidence="1">Belongs to the universal ribosomal protein uS11 family.</text>
</comment>
<gene>
    <name evidence="1" type="primary">rpsK</name>
    <name type="ordered locus">MADE_1013945</name>
</gene>
<feature type="chain" id="PRO_1000141048" description="Small ribosomal subunit protein uS11">
    <location>
        <begin position="1"/>
        <end position="130"/>
    </location>
</feature>